<proteinExistence type="inferred from homology"/>
<sequence>MDTATPSAEAILRTAAGRARAAMRSLAAMPAARRDGALRAAAAELRIHAVNILAANARDLDSFEGPPAMRDRLLLNEARIEAIAAGIDAIADLPDPLAGSLAEWTRPNGLVIRRVPQPLGVIGMIYESRPNVGADAAAICIKSGNAVILRGGSESYHSNTAIYLAMTKGLRQAGFPDGTVQIAPNIDRAFVAAMLGASGQIDLIIPRGGKSLVERVQREARVPVLAHAEGLNHTYIHAEADAEMARTVLANAKMRRTGICGATETLLIDAAIAPALLPRLIEDLAALGCGFRADDRARAIVPSLPAAGPADFDTEWLDAMLSVSVVDDLDAALDHIARHGSSHTEAIVTENADAAARFLAGTDSAVAMWNASTQFCDGGEFGFGAEIGIATGRIHARGPIGPAQLTTFRYHVVGTGQVRP</sequence>
<evidence type="ECO:0000255" key="1">
    <source>
        <dbReference type="HAMAP-Rule" id="MF_00412"/>
    </source>
</evidence>
<comment type="function">
    <text evidence="1">Catalyzes the NADPH-dependent reduction of L-glutamate 5-phosphate into L-glutamate 5-semialdehyde and phosphate. The product spontaneously undergoes cyclization to form 1-pyrroline-5-carboxylate.</text>
</comment>
<comment type="catalytic activity">
    <reaction evidence="1">
        <text>L-glutamate 5-semialdehyde + phosphate + NADP(+) = L-glutamyl 5-phosphate + NADPH + H(+)</text>
        <dbReference type="Rhea" id="RHEA:19541"/>
        <dbReference type="ChEBI" id="CHEBI:15378"/>
        <dbReference type="ChEBI" id="CHEBI:43474"/>
        <dbReference type="ChEBI" id="CHEBI:57783"/>
        <dbReference type="ChEBI" id="CHEBI:58066"/>
        <dbReference type="ChEBI" id="CHEBI:58274"/>
        <dbReference type="ChEBI" id="CHEBI:58349"/>
        <dbReference type="EC" id="1.2.1.41"/>
    </reaction>
</comment>
<comment type="pathway">
    <text evidence="1">Amino-acid biosynthesis; L-proline biosynthesis; L-glutamate 5-semialdehyde from L-glutamate: step 2/2.</text>
</comment>
<comment type="subcellular location">
    <subcellularLocation>
        <location evidence="1">Cytoplasm</location>
    </subcellularLocation>
</comment>
<comment type="similarity">
    <text evidence="1">Belongs to the gamma-glutamyl phosphate reductase family.</text>
</comment>
<dbReference type="EC" id="1.2.1.41" evidence="1"/>
<dbReference type="EMBL" id="CP000697">
    <property type="protein sequence ID" value="ABQ30756.1"/>
    <property type="molecule type" value="Genomic_DNA"/>
</dbReference>
<dbReference type="RefSeq" id="WP_011942326.1">
    <property type="nucleotide sequence ID" value="NC_009484.1"/>
</dbReference>
<dbReference type="SMR" id="A5FYS4"/>
<dbReference type="STRING" id="349163.Acry_1548"/>
<dbReference type="KEGG" id="acr:Acry_1548"/>
<dbReference type="eggNOG" id="COG0014">
    <property type="taxonomic scope" value="Bacteria"/>
</dbReference>
<dbReference type="HOGENOM" id="CLU_030231_0_0_5"/>
<dbReference type="UniPathway" id="UPA00098">
    <property type="reaction ID" value="UER00360"/>
</dbReference>
<dbReference type="Proteomes" id="UP000000245">
    <property type="component" value="Chromosome"/>
</dbReference>
<dbReference type="GO" id="GO:0005737">
    <property type="term" value="C:cytoplasm"/>
    <property type="evidence" value="ECO:0007669"/>
    <property type="project" value="UniProtKB-SubCell"/>
</dbReference>
<dbReference type="GO" id="GO:0004350">
    <property type="term" value="F:glutamate-5-semialdehyde dehydrogenase activity"/>
    <property type="evidence" value="ECO:0007669"/>
    <property type="project" value="UniProtKB-UniRule"/>
</dbReference>
<dbReference type="GO" id="GO:0050661">
    <property type="term" value="F:NADP binding"/>
    <property type="evidence" value="ECO:0007669"/>
    <property type="project" value="InterPro"/>
</dbReference>
<dbReference type="GO" id="GO:0055129">
    <property type="term" value="P:L-proline biosynthetic process"/>
    <property type="evidence" value="ECO:0007669"/>
    <property type="project" value="UniProtKB-UniRule"/>
</dbReference>
<dbReference type="CDD" id="cd07079">
    <property type="entry name" value="ALDH_F18-19_ProA-GPR"/>
    <property type="match status" value="1"/>
</dbReference>
<dbReference type="Gene3D" id="3.40.605.10">
    <property type="entry name" value="Aldehyde Dehydrogenase, Chain A, domain 1"/>
    <property type="match status" value="1"/>
</dbReference>
<dbReference type="Gene3D" id="3.40.309.10">
    <property type="entry name" value="Aldehyde Dehydrogenase, Chain A, domain 2"/>
    <property type="match status" value="1"/>
</dbReference>
<dbReference type="HAMAP" id="MF_00412">
    <property type="entry name" value="ProA"/>
    <property type="match status" value="1"/>
</dbReference>
<dbReference type="InterPro" id="IPR016161">
    <property type="entry name" value="Ald_DH/histidinol_DH"/>
</dbReference>
<dbReference type="InterPro" id="IPR016163">
    <property type="entry name" value="Ald_DH_C"/>
</dbReference>
<dbReference type="InterPro" id="IPR016162">
    <property type="entry name" value="Ald_DH_N"/>
</dbReference>
<dbReference type="InterPro" id="IPR015590">
    <property type="entry name" value="Aldehyde_DH_dom"/>
</dbReference>
<dbReference type="InterPro" id="IPR020593">
    <property type="entry name" value="G-glutamylP_reductase_CS"/>
</dbReference>
<dbReference type="InterPro" id="IPR012134">
    <property type="entry name" value="Glu-5-SA_DH"/>
</dbReference>
<dbReference type="InterPro" id="IPR000965">
    <property type="entry name" value="GPR_dom"/>
</dbReference>
<dbReference type="NCBIfam" id="NF001221">
    <property type="entry name" value="PRK00197.1"/>
    <property type="match status" value="1"/>
</dbReference>
<dbReference type="NCBIfam" id="TIGR00407">
    <property type="entry name" value="proA"/>
    <property type="match status" value="1"/>
</dbReference>
<dbReference type="PANTHER" id="PTHR11063:SF8">
    <property type="entry name" value="DELTA-1-PYRROLINE-5-CARBOXYLATE SYNTHASE"/>
    <property type="match status" value="1"/>
</dbReference>
<dbReference type="PANTHER" id="PTHR11063">
    <property type="entry name" value="GLUTAMATE SEMIALDEHYDE DEHYDROGENASE"/>
    <property type="match status" value="1"/>
</dbReference>
<dbReference type="Pfam" id="PF00171">
    <property type="entry name" value="Aldedh"/>
    <property type="match status" value="1"/>
</dbReference>
<dbReference type="PIRSF" id="PIRSF000151">
    <property type="entry name" value="GPR"/>
    <property type="match status" value="1"/>
</dbReference>
<dbReference type="SUPFAM" id="SSF53720">
    <property type="entry name" value="ALDH-like"/>
    <property type="match status" value="1"/>
</dbReference>
<dbReference type="PROSITE" id="PS01223">
    <property type="entry name" value="PROA"/>
    <property type="match status" value="1"/>
</dbReference>
<accession>A5FYS4</accession>
<feature type="chain" id="PRO_0000340869" description="Gamma-glutamyl phosphate reductase">
    <location>
        <begin position="1"/>
        <end position="420"/>
    </location>
</feature>
<keyword id="KW-0028">Amino-acid biosynthesis</keyword>
<keyword id="KW-0963">Cytoplasm</keyword>
<keyword id="KW-0521">NADP</keyword>
<keyword id="KW-0560">Oxidoreductase</keyword>
<keyword id="KW-0641">Proline biosynthesis</keyword>
<keyword id="KW-1185">Reference proteome</keyword>
<name>PROA_ACICJ</name>
<gene>
    <name evidence="1" type="primary">proA</name>
    <name type="ordered locus">Acry_1548</name>
</gene>
<reference key="1">
    <citation type="submission" date="2007-05" db="EMBL/GenBank/DDBJ databases">
        <title>Complete sequence of chromosome of Acidiphilium cryptum JF-5.</title>
        <authorList>
            <consortium name="US DOE Joint Genome Institute"/>
            <person name="Copeland A."/>
            <person name="Lucas S."/>
            <person name="Lapidus A."/>
            <person name="Barry K."/>
            <person name="Detter J.C."/>
            <person name="Glavina del Rio T."/>
            <person name="Hammon N."/>
            <person name="Israni S."/>
            <person name="Dalin E."/>
            <person name="Tice H."/>
            <person name="Pitluck S."/>
            <person name="Sims D."/>
            <person name="Brettin T."/>
            <person name="Bruce D."/>
            <person name="Han C."/>
            <person name="Schmutz J."/>
            <person name="Larimer F."/>
            <person name="Land M."/>
            <person name="Hauser L."/>
            <person name="Kyrpides N."/>
            <person name="Kim E."/>
            <person name="Magnuson T."/>
            <person name="Richardson P."/>
        </authorList>
    </citation>
    <scope>NUCLEOTIDE SEQUENCE [LARGE SCALE GENOMIC DNA]</scope>
    <source>
        <strain>JF-5</strain>
    </source>
</reference>
<protein>
    <recommendedName>
        <fullName evidence="1">Gamma-glutamyl phosphate reductase</fullName>
        <shortName evidence="1">GPR</shortName>
        <ecNumber evidence="1">1.2.1.41</ecNumber>
    </recommendedName>
    <alternativeName>
        <fullName evidence="1">Glutamate-5-semialdehyde dehydrogenase</fullName>
    </alternativeName>
    <alternativeName>
        <fullName evidence="1">Glutamyl-gamma-semialdehyde dehydrogenase</fullName>
        <shortName evidence="1">GSA dehydrogenase</shortName>
    </alternativeName>
</protein>
<organism>
    <name type="scientific">Acidiphilium cryptum (strain JF-5)</name>
    <dbReference type="NCBI Taxonomy" id="349163"/>
    <lineage>
        <taxon>Bacteria</taxon>
        <taxon>Pseudomonadati</taxon>
        <taxon>Pseudomonadota</taxon>
        <taxon>Alphaproteobacteria</taxon>
        <taxon>Acetobacterales</taxon>
        <taxon>Acidocellaceae</taxon>
        <taxon>Acidiphilium</taxon>
    </lineage>
</organism>